<accession>Q57AG3</accession>
<dbReference type="EC" id="3.13.2.1" evidence="1"/>
<dbReference type="EMBL" id="AE017223">
    <property type="protein sequence ID" value="AAX75371.1"/>
    <property type="molecule type" value="Genomic_DNA"/>
</dbReference>
<dbReference type="RefSeq" id="WP_002965162.1">
    <property type="nucleotide sequence ID" value="NC_006932.1"/>
</dbReference>
<dbReference type="SMR" id="Q57AG3"/>
<dbReference type="EnsemblBacteria" id="AAX75371">
    <property type="protein sequence ID" value="AAX75371"/>
    <property type="gene ID" value="BruAb1_2072"/>
</dbReference>
<dbReference type="GeneID" id="97534642"/>
<dbReference type="KEGG" id="bmb:BruAb1_2072"/>
<dbReference type="HOGENOM" id="CLU_025194_2_0_5"/>
<dbReference type="UniPathway" id="UPA00314">
    <property type="reaction ID" value="UER00076"/>
</dbReference>
<dbReference type="Proteomes" id="UP000000540">
    <property type="component" value="Chromosome I"/>
</dbReference>
<dbReference type="GO" id="GO:0005829">
    <property type="term" value="C:cytosol"/>
    <property type="evidence" value="ECO:0007669"/>
    <property type="project" value="TreeGrafter"/>
</dbReference>
<dbReference type="GO" id="GO:0004013">
    <property type="term" value="F:adenosylhomocysteinase activity"/>
    <property type="evidence" value="ECO:0007669"/>
    <property type="project" value="UniProtKB-UniRule"/>
</dbReference>
<dbReference type="GO" id="GO:0071269">
    <property type="term" value="P:L-homocysteine biosynthetic process"/>
    <property type="evidence" value="ECO:0007669"/>
    <property type="project" value="UniProtKB-UniRule"/>
</dbReference>
<dbReference type="GO" id="GO:0006730">
    <property type="term" value="P:one-carbon metabolic process"/>
    <property type="evidence" value="ECO:0007669"/>
    <property type="project" value="UniProtKB-KW"/>
</dbReference>
<dbReference type="GO" id="GO:0033353">
    <property type="term" value="P:S-adenosylmethionine cycle"/>
    <property type="evidence" value="ECO:0007669"/>
    <property type="project" value="TreeGrafter"/>
</dbReference>
<dbReference type="CDD" id="cd00401">
    <property type="entry name" value="SAHH"/>
    <property type="match status" value="1"/>
</dbReference>
<dbReference type="FunFam" id="3.40.50.720:FF:000004">
    <property type="entry name" value="Adenosylhomocysteinase"/>
    <property type="match status" value="1"/>
</dbReference>
<dbReference type="Gene3D" id="3.40.50.1480">
    <property type="entry name" value="Adenosylhomocysteinase-like"/>
    <property type="match status" value="1"/>
</dbReference>
<dbReference type="Gene3D" id="3.40.50.720">
    <property type="entry name" value="NAD(P)-binding Rossmann-like Domain"/>
    <property type="match status" value="1"/>
</dbReference>
<dbReference type="HAMAP" id="MF_00563">
    <property type="entry name" value="AdoHcyase"/>
    <property type="match status" value="1"/>
</dbReference>
<dbReference type="InterPro" id="IPR042172">
    <property type="entry name" value="Adenosylhomocyst_ase-like_sf"/>
</dbReference>
<dbReference type="InterPro" id="IPR000043">
    <property type="entry name" value="Adenosylhomocysteinase-like"/>
</dbReference>
<dbReference type="InterPro" id="IPR015878">
    <property type="entry name" value="Ado_hCys_hydrolase_NAD-bd"/>
</dbReference>
<dbReference type="InterPro" id="IPR036291">
    <property type="entry name" value="NAD(P)-bd_dom_sf"/>
</dbReference>
<dbReference type="InterPro" id="IPR020082">
    <property type="entry name" value="S-Ado-L-homoCys_hydrolase_CS"/>
</dbReference>
<dbReference type="NCBIfam" id="TIGR00936">
    <property type="entry name" value="ahcY"/>
    <property type="match status" value="1"/>
</dbReference>
<dbReference type="NCBIfam" id="NF004005">
    <property type="entry name" value="PRK05476.2-3"/>
    <property type="match status" value="1"/>
</dbReference>
<dbReference type="PANTHER" id="PTHR23420">
    <property type="entry name" value="ADENOSYLHOMOCYSTEINASE"/>
    <property type="match status" value="1"/>
</dbReference>
<dbReference type="PANTHER" id="PTHR23420:SF0">
    <property type="entry name" value="ADENOSYLHOMOCYSTEINASE"/>
    <property type="match status" value="1"/>
</dbReference>
<dbReference type="Pfam" id="PF05221">
    <property type="entry name" value="AdoHcyase"/>
    <property type="match status" value="1"/>
</dbReference>
<dbReference type="Pfam" id="PF00670">
    <property type="entry name" value="AdoHcyase_NAD"/>
    <property type="match status" value="1"/>
</dbReference>
<dbReference type="PIRSF" id="PIRSF001109">
    <property type="entry name" value="Ad_hcy_hydrolase"/>
    <property type="match status" value="1"/>
</dbReference>
<dbReference type="SMART" id="SM00996">
    <property type="entry name" value="AdoHcyase"/>
    <property type="match status" value="1"/>
</dbReference>
<dbReference type="SMART" id="SM00997">
    <property type="entry name" value="AdoHcyase_NAD"/>
    <property type="match status" value="1"/>
</dbReference>
<dbReference type="SUPFAM" id="SSF52283">
    <property type="entry name" value="Formate/glycerate dehydrogenase catalytic domain-like"/>
    <property type="match status" value="1"/>
</dbReference>
<dbReference type="SUPFAM" id="SSF51735">
    <property type="entry name" value="NAD(P)-binding Rossmann-fold domains"/>
    <property type="match status" value="1"/>
</dbReference>
<dbReference type="PROSITE" id="PS00738">
    <property type="entry name" value="ADOHCYASE_1"/>
    <property type="match status" value="1"/>
</dbReference>
<dbReference type="PROSITE" id="PS00739">
    <property type="entry name" value="ADOHCYASE_2"/>
    <property type="match status" value="1"/>
</dbReference>
<sequence>MTASQDFVVKDISLADWGRKELDIAETEMPGLMAAREEFGKSQPLKGARISGSLHMTIQTAVLIETLKVLGAEVRWASCNIFSTQDHAAAAIAATGTPVFAVKGETLEEYWTYTDQIFQWPDGEPSNMILDDGGDATMYILIGARAEAGEDVLSNPQSEEEEVLFAQIKKRMAATPGFFTKQRAAIKGVTEETTTGVNRLYQLQKKGLLPFPAINVNDSVTKSKFDNKYGCKESLVDGIRRGTDVMMAGKVAVVCGYGDVGKGSAQSLAGAGARVKVTEVDPICALQAAMDGFEVVTLDDAASTADIVVTTTGNKDVITIDHMRKMKDMCIVGNIGHFDNEIQVAALRNLKWTNVKPQVDLIEFPDGKRLILLSEGRLLNLGNATGHPSFVMSASFTNQVLGQIELFTRTDAYKNEVYVLPKHLDEKVARLHLDKLGAKLTVLSEEQAAYIGVTPQGPFKSEHYRY</sequence>
<evidence type="ECO:0000255" key="1">
    <source>
        <dbReference type="HAMAP-Rule" id="MF_00563"/>
    </source>
</evidence>
<name>SAHH_BRUAB</name>
<keyword id="KW-0963">Cytoplasm</keyword>
<keyword id="KW-0378">Hydrolase</keyword>
<keyword id="KW-0520">NAD</keyword>
<keyword id="KW-0554">One-carbon metabolism</keyword>
<proteinExistence type="inferred from homology"/>
<comment type="function">
    <text evidence="1">May play a key role in the regulation of the intracellular concentration of adenosylhomocysteine.</text>
</comment>
<comment type="catalytic activity">
    <reaction evidence="1">
        <text>S-adenosyl-L-homocysteine + H2O = L-homocysteine + adenosine</text>
        <dbReference type="Rhea" id="RHEA:21708"/>
        <dbReference type="ChEBI" id="CHEBI:15377"/>
        <dbReference type="ChEBI" id="CHEBI:16335"/>
        <dbReference type="ChEBI" id="CHEBI:57856"/>
        <dbReference type="ChEBI" id="CHEBI:58199"/>
        <dbReference type="EC" id="3.13.2.1"/>
    </reaction>
</comment>
<comment type="cofactor">
    <cofactor evidence="1">
        <name>NAD(+)</name>
        <dbReference type="ChEBI" id="CHEBI:57540"/>
    </cofactor>
    <text evidence="1">Binds 1 NAD(+) per subunit.</text>
</comment>
<comment type="pathway">
    <text evidence="1">Amino-acid biosynthesis; L-homocysteine biosynthesis; L-homocysteine from S-adenosyl-L-homocysteine: step 1/1.</text>
</comment>
<comment type="subcellular location">
    <subcellularLocation>
        <location evidence="1">Cytoplasm</location>
    </subcellularLocation>
</comment>
<comment type="similarity">
    <text evidence="1">Belongs to the adenosylhomocysteinase family.</text>
</comment>
<protein>
    <recommendedName>
        <fullName evidence="1">Adenosylhomocysteinase</fullName>
        <ecNumber evidence="1">3.13.2.1</ecNumber>
    </recommendedName>
    <alternativeName>
        <fullName evidence="1">S-adenosyl-L-homocysteine hydrolase</fullName>
        <shortName evidence="1">AdoHcyase</shortName>
    </alternativeName>
</protein>
<organism>
    <name type="scientific">Brucella abortus biovar 1 (strain 9-941)</name>
    <dbReference type="NCBI Taxonomy" id="262698"/>
    <lineage>
        <taxon>Bacteria</taxon>
        <taxon>Pseudomonadati</taxon>
        <taxon>Pseudomonadota</taxon>
        <taxon>Alphaproteobacteria</taxon>
        <taxon>Hyphomicrobiales</taxon>
        <taxon>Brucellaceae</taxon>
        <taxon>Brucella/Ochrobactrum group</taxon>
        <taxon>Brucella</taxon>
    </lineage>
</organism>
<gene>
    <name evidence="1" type="primary">ahcY</name>
    <name type="ordered locus">BruAb1_2072</name>
</gene>
<reference key="1">
    <citation type="journal article" date="2005" name="J. Bacteriol.">
        <title>Completion of the genome sequence of Brucella abortus and comparison to the highly similar genomes of Brucella melitensis and Brucella suis.</title>
        <authorList>
            <person name="Halling S.M."/>
            <person name="Peterson-Burch B.D."/>
            <person name="Bricker B.J."/>
            <person name="Zuerner R.L."/>
            <person name="Qing Z."/>
            <person name="Li L.-L."/>
            <person name="Kapur V."/>
            <person name="Alt D.P."/>
            <person name="Olsen S.C."/>
        </authorList>
    </citation>
    <scope>NUCLEOTIDE SEQUENCE [LARGE SCALE GENOMIC DNA]</scope>
    <source>
        <strain>9-941</strain>
    </source>
</reference>
<feature type="chain" id="PRO_1000024712" description="Adenosylhomocysteinase">
    <location>
        <begin position="1"/>
        <end position="466"/>
    </location>
</feature>
<feature type="binding site" evidence="1">
    <location>
        <position position="57"/>
    </location>
    <ligand>
        <name>substrate</name>
    </ligand>
</feature>
<feature type="binding site" evidence="1">
    <location>
        <position position="132"/>
    </location>
    <ligand>
        <name>substrate</name>
    </ligand>
</feature>
<feature type="binding site" evidence="1">
    <location>
        <position position="192"/>
    </location>
    <ligand>
        <name>substrate</name>
    </ligand>
</feature>
<feature type="binding site" evidence="1">
    <location>
        <begin position="193"/>
        <end position="195"/>
    </location>
    <ligand>
        <name>NAD(+)</name>
        <dbReference type="ChEBI" id="CHEBI:57540"/>
    </ligand>
</feature>
<feature type="binding site" evidence="1">
    <location>
        <position position="222"/>
    </location>
    <ligand>
        <name>substrate</name>
    </ligand>
</feature>
<feature type="binding site" evidence="1">
    <location>
        <position position="226"/>
    </location>
    <ligand>
        <name>substrate</name>
    </ligand>
</feature>
<feature type="binding site" evidence="1">
    <location>
        <position position="227"/>
    </location>
    <ligand>
        <name>NAD(+)</name>
        <dbReference type="ChEBI" id="CHEBI:57540"/>
    </ligand>
</feature>
<feature type="binding site" evidence="1">
    <location>
        <begin position="256"/>
        <end position="261"/>
    </location>
    <ligand>
        <name>NAD(+)</name>
        <dbReference type="ChEBI" id="CHEBI:57540"/>
    </ligand>
</feature>
<feature type="binding site" evidence="1">
    <location>
        <position position="279"/>
    </location>
    <ligand>
        <name>NAD(+)</name>
        <dbReference type="ChEBI" id="CHEBI:57540"/>
    </ligand>
</feature>
<feature type="binding site" evidence="1">
    <location>
        <position position="314"/>
    </location>
    <ligand>
        <name>NAD(+)</name>
        <dbReference type="ChEBI" id="CHEBI:57540"/>
    </ligand>
</feature>
<feature type="binding site" evidence="1">
    <location>
        <begin position="335"/>
        <end position="337"/>
    </location>
    <ligand>
        <name>NAD(+)</name>
        <dbReference type="ChEBI" id="CHEBI:57540"/>
    </ligand>
</feature>
<feature type="binding site" evidence="1">
    <location>
        <position position="380"/>
    </location>
    <ligand>
        <name>NAD(+)</name>
        <dbReference type="ChEBI" id="CHEBI:57540"/>
    </ligand>
</feature>